<accession>Q5M2M4</accession>
<gene>
    <name evidence="2" type="primary">rpsL</name>
    <name type="ordered locus">stu1791</name>
</gene>
<dbReference type="EMBL" id="CP000023">
    <property type="protein sequence ID" value="AAV61390.1"/>
    <property type="molecule type" value="Genomic_DNA"/>
</dbReference>
<dbReference type="RefSeq" id="WP_002884809.1">
    <property type="nucleotide sequence ID" value="NC_006448.1"/>
</dbReference>
<dbReference type="SMR" id="Q5M2M4"/>
<dbReference type="STRING" id="264199.stu1791"/>
<dbReference type="GeneID" id="93792954"/>
<dbReference type="KEGG" id="stl:stu1791"/>
<dbReference type="eggNOG" id="COG0048">
    <property type="taxonomic scope" value="Bacteria"/>
</dbReference>
<dbReference type="HOGENOM" id="CLU_104295_1_2_9"/>
<dbReference type="Proteomes" id="UP000001170">
    <property type="component" value="Chromosome"/>
</dbReference>
<dbReference type="GO" id="GO:0015935">
    <property type="term" value="C:small ribosomal subunit"/>
    <property type="evidence" value="ECO:0007669"/>
    <property type="project" value="InterPro"/>
</dbReference>
<dbReference type="GO" id="GO:0019843">
    <property type="term" value="F:rRNA binding"/>
    <property type="evidence" value="ECO:0007669"/>
    <property type="project" value="UniProtKB-UniRule"/>
</dbReference>
<dbReference type="GO" id="GO:0003735">
    <property type="term" value="F:structural constituent of ribosome"/>
    <property type="evidence" value="ECO:0007669"/>
    <property type="project" value="InterPro"/>
</dbReference>
<dbReference type="GO" id="GO:0000049">
    <property type="term" value="F:tRNA binding"/>
    <property type="evidence" value="ECO:0007669"/>
    <property type="project" value="UniProtKB-UniRule"/>
</dbReference>
<dbReference type="GO" id="GO:0006412">
    <property type="term" value="P:translation"/>
    <property type="evidence" value="ECO:0007669"/>
    <property type="project" value="UniProtKB-UniRule"/>
</dbReference>
<dbReference type="CDD" id="cd03368">
    <property type="entry name" value="Ribosomal_S12"/>
    <property type="match status" value="1"/>
</dbReference>
<dbReference type="FunFam" id="2.40.50.140:FF:000001">
    <property type="entry name" value="30S ribosomal protein S12"/>
    <property type="match status" value="1"/>
</dbReference>
<dbReference type="Gene3D" id="2.40.50.140">
    <property type="entry name" value="Nucleic acid-binding proteins"/>
    <property type="match status" value="1"/>
</dbReference>
<dbReference type="HAMAP" id="MF_00403_B">
    <property type="entry name" value="Ribosomal_uS12_B"/>
    <property type="match status" value="1"/>
</dbReference>
<dbReference type="InterPro" id="IPR012340">
    <property type="entry name" value="NA-bd_OB-fold"/>
</dbReference>
<dbReference type="InterPro" id="IPR006032">
    <property type="entry name" value="Ribosomal_uS12"/>
</dbReference>
<dbReference type="InterPro" id="IPR005679">
    <property type="entry name" value="Ribosomal_uS12_bac"/>
</dbReference>
<dbReference type="NCBIfam" id="TIGR00981">
    <property type="entry name" value="rpsL_bact"/>
    <property type="match status" value="1"/>
</dbReference>
<dbReference type="PANTHER" id="PTHR11652">
    <property type="entry name" value="30S RIBOSOMAL PROTEIN S12 FAMILY MEMBER"/>
    <property type="match status" value="1"/>
</dbReference>
<dbReference type="Pfam" id="PF00164">
    <property type="entry name" value="Ribosom_S12_S23"/>
    <property type="match status" value="1"/>
</dbReference>
<dbReference type="PIRSF" id="PIRSF002133">
    <property type="entry name" value="Ribosomal_S12/S23"/>
    <property type="match status" value="1"/>
</dbReference>
<dbReference type="PRINTS" id="PR01034">
    <property type="entry name" value="RIBOSOMALS12"/>
</dbReference>
<dbReference type="SUPFAM" id="SSF50249">
    <property type="entry name" value="Nucleic acid-binding proteins"/>
    <property type="match status" value="1"/>
</dbReference>
<dbReference type="PROSITE" id="PS00055">
    <property type="entry name" value="RIBOSOMAL_S12"/>
    <property type="match status" value="1"/>
</dbReference>
<reference key="1">
    <citation type="journal article" date="2004" name="Nat. Biotechnol.">
        <title>Complete sequence and comparative genome analysis of the dairy bacterium Streptococcus thermophilus.</title>
        <authorList>
            <person name="Bolotin A."/>
            <person name="Quinquis B."/>
            <person name="Renault P."/>
            <person name="Sorokin A."/>
            <person name="Ehrlich S.D."/>
            <person name="Kulakauskas S."/>
            <person name="Lapidus A."/>
            <person name="Goltsman E."/>
            <person name="Mazur M."/>
            <person name="Pusch G.D."/>
            <person name="Fonstein M."/>
            <person name="Overbeek R."/>
            <person name="Kyprides N."/>
            <person name="Purnelle B."/>
            <person name="Prozzi D."/>
            <person name="Ngui K."/>
            <person name="Masuy D."/>
            <person name="Hancy F."/>
            <person name="Burteau S."/>
            <person name="Boutry M."/>
            <person name="Delcour J."/>
            <person name="Goffeau A."/>
            <person name="Hols P."/>
        </authorList>
    </citation>
    <scope>NUCLEOTIDE SEQUENCE [LARGE SCALE GENOMIC DNA]</scope>
    <source>
        <strain>ATCC BAA-250 / LMG 18311</strain>
    </source>
</reference>
<organism>
    <name type="scientific">Streptococcus thermophilus (strain ATCC BAA-250 / LMG 18311)</name>
    <dbReference type="NCBI Taxonomy" id="264199"/>
    <lineage>
        <taxon>Bacteria</taxon>
        <taxon>Bacillati</taxon>
        <taxon>Bacillota</taxon>
        <taxon>Bacilli</taxon>
        <taxon>Lactobacillales</taxon>
        <taxon>Streptococcaceae</taxon>
        <taxon>Streptococcus</taxon>
    </lineage>
</organism>
<sequence length="137" mass="15057">MPTINQLVRKPRQSKVVKSKSPALNVGYNSHKKVQTNVSSPQKRGVATRVGTMTPKKPNSALRKFARVRLSNLIEVTAYIPGIGHNLQEHSVVLIRGGRVKDLPGVRYHIVRGALDTAGVADRKQSRSKYGAKRPKG</sequence>
<protein>
    <recommendedName>
        <fullName evidence="2">Small ribosomal subunit protein uS12</fullName>
    </recommendedName>
    <alternativeName>
        <fullName evidence="4">30S ribosomal protein S12</fullName>
    </alternativeName>
</protein>
<evidence type="ECO:0000250" key="1"/>
<evidence type="ECO:0000255" key="2">
    <source>
        <dbReference type="HAMAP-Rule" id="MF_00403"/>
    </source>
</evidence>
<evidence type="ECO:0000256" key="3">
    <source>
        <dbReference type="SAM" id="MobiDB-lite"/>
    </source>
</evidence>
<evidence type="ECO:0000305" key="4"/>
<proteinExistence type="inferred from homology"/>
<feature type="chain" id="PRO_0000146332" description="Small ribosomal subunit protein uS12">
    <location>
        <begin position="1"/>
        <end position="137"/>
    </location>
</feature>
<feature type="region of interest" description="Disordered" evidence="3">
    <location>
        <begin position="33"/>
        <end position="57"/>
    </location>
</feature>
<feature type="modified residue" description="3-methylthioaspartic acid" evidence="1">
    <location>
        <position position="102"/>
    </location>
</feature>
<keyword id="KW-0488">Methylation</keyword>
<keyword id="KW-1185">Reference proteome</keyword>
<keyword id="KW-0687">Ribonucleoprotein</keyword>
<keyword id="KW-0689">Ribosomal protein</keyword>
<keyword id="KW-0694">RNA-binding</keyword>
<keyword id="KW-0699">rRNA-binding</keyword>
<keyword id="KW-0820">tRNA-binding</keyword>
<name>RS12_STRT2</name>
<comment type="function">
    <text evidence="2">With S4 and S5 plays an important role in translational accuracy.</text>
</comment>
<comment type="function">
    <text evidence="2">Interacts with and stabilizes bases of the 16S rRNA that are involved in tRNA selection in the A site and with the mRNA backbone. Located at the interface of the 30S and 50S subunits, it traverses the body of the 30S subunit contacting proteins on the other side and probably holding the rRNA structure together. The combined cluster of proteins S8, S12 and S17 appears to hold together the shoulder and platform of the 30S subunit.</text>
</comment>
<comment type="subunit">
    <text evidence="2">Part of the 30S ribosomal subunit. Contacts proteins S8 and S17. May interact with IF1 in the 30S initiation complex.</text>
</comment>
<comment type="similarity">
    <text evidence="2">Belongs to the universal ribosomal protein uS12 family.</text>
</comment>